<keyword id="KW-0539">Nucleus</keyword>
<keyword id="KW-1185">Reference proteome</keyword>
<comment type="subcellular location">
    <subcellularLocation>
        <location evidence="3">Nucleus</location>
    </subcellularLocation>
</comment>
<comment type="sequence caution" evidence="3">
    <conflict type="erroneous initiation">
        <sequence resource="EMBL-CDS" id="AAH34653"/>
    </conflict>
    <text>Extended N-terminus.</text>
</comment>
<comment type="sequence caution" evidence="3">
    <conflict type="erroneous initiation">
        <sequence resource="EMBL-CDS" id="AAH40686"/>
    </conflict>
    <text>Extended N-terminus.</text>
</comment>
<name>R3HD4_MOUSE</name>
<reference key="1">
    <citation type="journal article" date="2005" name="Science">
        <title>The transcriptional landscape of the mammalian genome.</title>
        <authorList>
            <person name="Carninci P."/>
            <person name="Kasukawa T."/>
            <person name="Katayama S."/>
            <person name="Gough J."/>
            <person name="Frith M.C."/>
            <person name="Maeda N."/>
            <person name="Oyama R."/>
            <person name="Ravasi T."/>
            <person name="Lenhard B."/>
            <person name="Wells C."/>
            <person name="Kodzius R."/>
            <person name="Shimokawa K."/>
            <person name="Bajic V.B."/>
            <person name="Brenner S.E."/>
            <person name="Batalov S."/>
            <person name="Forrest A.R."/>
            <person name="Zavolan M."/>
            <person name="Davis M.J."/>
            <person name="Wilming L.G."/>
            <person name="Aidinis V."/>
            <person name="Allen J.E."/>
            <person name="Ambesi-Impiombato A."/>
            <person name="Apweiler R."/>
            <person name="Aturaliya R.N."/>
            <person name="Bailey T.L."/>
            <person name="Bansal M."/>
            <person name="Baxter L."/>
            <person name="Beisel K.W."/>
            <person name="Bersano T."/>
            <person name="Bono H."/>
            <person name="Chalk A.M."/>
            <person name="Chiu K.P."/>
            <person name="Choudhary V."/>
            <person name="Christoffels A."/>
            <person name="Clutterbuck D.R."/>
            <person name="Crowe M.L."/>
            <person name="Dalla E."/>
            <person name="Dalrymple B.P."/>
            <person name="de Bono B."/>
            <person name="Della Gatta G."/>
            <person name="di Bernardo D."/>
            <person name="Down T."/>
            <person name="Engstrom P."/>
            <person name="Fagiolini M."/>
            <person name="Faulkner G."/>
            <person name="Fletcher C.F."/>
            <person name="Fukushima T."/>
            <person name="Furuno M."/>
            <person name="Futaki S."/>
            <person name="Gariboldi M."/>
            <person name="Georgii-Hemming P."/>
            <person name="Gingeras T.R."/>
            <person name="Gojobori T."/>
            <person name="Green R.E."/>
            <person name="Gustincich S."/>
            <person name="Harbers M."/>
            <person name="Hayashi Y."/>
            <person name="Hensch T.K."/>
            <person name="Hirokawa N."/>
            <person name="Hill D."/>
            <person name="Huminiecki L."/>
            <person name="Iacono M."/>
            <person name="Ikeo K."/>
            <person name="Iwama A."/>
            <person name="Ishikawa T."/>
            <person name="Jakt M."/>
            <person name="Kanapin A."/>
            <person name="Katoh M."/>
            <person name="Kawasawa Y."/>
            <person name="Kelso J."/>
            <person name="Kitamura H."/>
            <person name="Kitano H."/>
            <person name="Kollias G."/>
            <person name="Krishnan S.P."/>
            <person name="Kruger A."/>
            <person name="Kummerfeld S.K."/>
            <person name="Kurochkin I.V."/>
            <person name="Lareau L.F."/>
            <person name="Lazarevic D."/>
            <person name="Lipovich L."/>
            <person name="Liu J."/>
            <person name="Liuni S."/>
            <person name="McWilliam S."/>
            <person name="Madan Babu M."/>
            <person name="Madera M."/>
            <person name="Marchionni L."/>
            <person name="Matsuda H."/>
            <person name="Matsuzawa S."/>
            <person name="Miki H."/>
            <person name="Mignone F."/>
            <person name="Miyake S."/>
            <person name="Morris K."/>
            <person name="Mottagui-Tabar S."/>
            <person name="Mulder N."/>
            <person name="Nakano N."/>
            <person name="Nakauchi H."/>
            <person name="Ng P."/>
            <person name="Nilsson R."/>
            <person name="Nishiguchi S."/>
            <person name="Nishikawa S."/>
            <person name="Nori F."/>
            <person name="Ohara O."/>
            <person name="Okazaki Y."/>
            <person name="Orlando V."/>
            <person name="Pang K.C."/>
            <person name="Pavan W.J."/>
            <person name="Pavesi G."/>
            <person name="Pesole G."/>
            <person name="Petrovsky N."/>
            <person name="Piazza S."/>
            <person name="Reed J."/>
            <person name="Reid J.F."/>
            <person name="Ring B.Z."/>
            <person name="Ringwald M."/>
            <person name="Rost B."/>
            <person name="Ruan Y."/>
            <person name="Salzberg S.L."/>
            <person name="Sandelin A."/>
            <person name="Schneider C."/>
            <person name="Schoenbach C."/>
            <person name="Sekiguchi K."/>
            <person name="Semple C.A."/>
            <person name="Seno S."/>
            <person name="Sessa L."/>
            <person name="Sheng Y."/>
            <person name="Shibata Y."/>
            <person name="Shimada H."/>
            <person name="Shimada K."/>
            <person name="Silva D."/>
            <person name="Sinclair B."/>
            <person name="Sperling S."/>
            <person name="Stupka E."/>
            <person name="Sugiura K."/>
            <person name="Sultana R."/>
            <person name="Takenaka Y."/>
            <person name="Taki K."/>
            <person name="Tammoja K."/>
            <person name="Tan S.L."/>
            <person name="Tang S."/>
            <person name="Taylor M.S."/>
            <person name="Tegner J."/>
            <person name="Teichmann S.A."/>
            <person name="Ueda H.R."/>
            <person name="van Nimwegen E."/>
            <person name="Verardo R."/>
            <person name="Wei C.L."/>
            <person name="Yagi K."/>
            <person name="Yamanishi H."/>
            <person name="Zabarovsky E."/>
            <person name="Zhu S."/>
            <person name="Zimmer A."/>
            <person name="Hide W."/>
            <person name="Bult C."/>
            <person name="Grimmond S.M."/>
            <person name="Teasdale R.D."/>
            <person name="Liu E.T."/>
            <person name="Brusic V."/>
            <person name="Quackenbush J."/>
            <person name="Wahlestedt C."/>
            <person name="Mattick J.S."/>
            <person name="Hume D.A."/>
            <person name="Kai C."/>
            <person name="Sasaki D."/>
            <person name="Tomaru Y."/>
            <person name="Fukuda S."/>
            <person name="Kanamori-Katayama M."/>
            <person name="Suzuki M."/>
            <person name="Aoki J."/>
            <person name="Arakawa T."/>
            <person name="Iida J."/>
            <person name="Imamura K."/>
            <person name="Itoh M."/>
            <person name="Kato T."/>
            <person name="Kawaji H."/>
            <person name="Kawagashira N."/>
            <person name="Kawashima T."/>
            <person name="Kojima M."/>
            <person name="Kondo S."/>
            <person name="Konno H."/>
            <person name="Nakano K."/>
            <person name="Ninomiya N."/>
            <person name="Nishio T."/>
            <person name="Okada M."/>
            <person name="Plessy C."/>
            <person name="Shibata K."/>
            <person name="Shiraki T."/>
            <person name="Suzuki S."/>
            <person name="Tagami M."/>
            <person name="Waki K."/>
            <person name="Watahiki A."/>
            <person name="Okamura-Oho Y."/>
            <person name="Suzuki H."/>
            <person name="Kawai J."/>
            <person name="Hayashizaki Y."/>
        </authorList>
    </citation>
    <scope>NUCLEOTIDE SEQUENCE [LARGE SCALE MRNA]</scope>
    <source>
        <strain>C57BL/6J</strain>
        <tissue>Corpus striatum</tissue>
    </source>
</reference>
<reference key="2">
    <citation type="journal article" date="2004" name="Genome Res.">
        <title>The status, quality, and expansion of the NIH full-length cDNA project: the Mammalian Gene Collection (MGC).</title>
        <authorList>
            <consortium name="The MGC Project Team"/>
        </authorList>
    </citation>
    <scope>NUCLEOTIDE SEQUENCE [LARGE SCALE MRNA]</scope>
    <source>
        <strain>C57BL/6J</strain>
        <strain>Czech II</strain>
        <strain>FVB/N</strain>
        <tissue>Colon</tissue>
        <tissue>Mammary tumor</tissue>
    </source>
</reference>
<accession>Q4VBF2</accession>
<accession>Q8BJN1</accession>
<accession>Q8CGD7</accession>
<accession>Q8JZZ8</accession>
<feature type="chain" id="PRO_0000281432" description="R3H domain-containing protein 4">
    <location>
        <begin position="1"/>
        <end position="262"/>
    </location>
</feature>
<feature type="domain" description="R3H" evidence="1">
    <location>
        <begin position="182"/>
        <end position="245"/>
    </location>
</feature>
<feature type="region of interest" description="Disordered" evidence="2">
    <location>
        <begin position="1"/>
        <end position="27"/>
    </location>
</feature>
<feature type="region of interest" description="Disordered" evidence="2">
    <location>
        <begin position="132"/>
        <end position="155"/>
    </location>
</feature>
<feature type="compositionally biased region" description="Basic and acidic residues" evidence="2">
    <location>
        <begin position="146"/>
        <end position="155"/>
    </location>
</feature>
<feature type="sequence conflict" description="In Ref. 1; BAC38183." evidence="3" ref="1">
    <original>E</original>
    <variation>K</variation>
    <location>
        <position position="8"/>
    </location>
</feature>
<organism>
    <name type="scientific">Mus musculus</name>
    <name type="common">Mouse</name>
    <dbReference type="NCBI Taxonomy" id="10090"/>
    <lineage>
        <taxon>Eukaryota</taxon>
        <taxon>Metazoa</taxon>
        <taxon>Chordata</taxon>
        <taxon>Craniata</taxon>
        <taxon>Vertebrata</taxon>
        <taxon>Euteleostomi</taxon>
        <taxon>Mammalia</taxon>
        <taxon>Eutheria</taxon>
        <taxon>Euarchontoglires</taxon>
        <taxon>Glires</taxon>
        <taxon>Rodentia</taxon>
        <taxon>Myomorpha</taxon>
        <taxon>Muroidea</taxon>
        <taxon>Muridae</taxon>
        <taxon>Murinae</taxon>
        <taxon>Mus</taxon>
        <taxon>Mus</taxon>
    </lineage>
</organism>
<protein>
    <recommendedName>
        <fullName>R3H domain-containing protein 4</fullName>
    </recommendedName>
</protein>
<gene>
    <name type="primary">R3hdm4</name>
</gene>
<evidence type="ECO:0000255" key="1">
    <source>
        <dbReference type="PROSITE-ProRule" id="PRU00382"/>
    </source>
</evidence>
<evidence type="ECO:0000256" key="2">
    <source>
        <dbReference type="SAM" id="MobiDB-lite"/>
    </source>
</evidence>
<evidence type="ECO:0000305" key="3"/>
<proteinExistence type="evidence at transcript level"/>
<dbReference type="EMBL" id="AK081288">
    <property type="protein sequence ID" value="BAC38183.1"/>
    <property type="molecule type" value="mRNA"/>
</dbReference>
<dbReference type="EMBL" id="AK165610">
    <property type="protein sequence ID" value="BAE38292.1"/>
    <property type="molecule type" value="mRNA"/>
</dbReference>
<dbReference type="EMBL" id="BC034653">
    <property type="protein sequence ID" value="AAH34653.1"/>
    <property type="status" value="ALT_INIT"/>
    <property type="molecule type" value="mRNA"/>
</dbReference>
<dbReference type="EMBL" id="BC040686">
    <property type="protein sequence ID" value="AAH40686.1"/>
    <property type="status" value="ALT_INIT"/>
    <property type="molecule type" value="mRNA"/>
</dbReference>
<dbReference type="EMBL" id="BC095970">
    <property type="protein sequence ID" value="AAH95970.1"/>
    <property type="molecule type" value="mRNA"/>
</dbReference>
<dbReference type="EMBL" id="BC132463">
    <property type="protein sequence ID" value="AAI32464.1"/>
    <property type="molecule type" value="mRNA"/>
</dbReference>
<dbReference type="CCDS" id="CCDS23997.1"/>
<dbReference type="RefSeq" id="NP_818775.2">
    <property type="nucleotide sequence ID" value="NM_177994.5"/>
</dbReference>
<dbReference type="SMR" id="Q4VBF2"/>
<dbReference type="BioGRID" id="224634">
    <property type="interactions" value="1"/>
</dbReference>
<dbReference type="FunCoup" id="Q4VBF2">
    <property type="interactions" value="10"/>
</dbReference>
<dbReference type="STRING" id="10090.ENSMUSP00000044570"/>
<dbReference type="GlyGen" id="Q4VBF2">
    <property type="glycosylation" value="1 site"/>
</dbReference>
<dbReference type="PhosphoSitePlus" id="Q4VBF2"/>
<dbReference type="PaxDb" id="10090-ENSMUSP00000044570"/>
<dbReference type="ProteomicsDB" id="300283"/>
<dbReference type="Pumba" id="Q4VBF2"/>
<dbReference type="Antibodypedia" id="53521">
    <property type="antibodies" value="35 antibodies from 11 providers"/>
</dbReference>
<dbReference type="Ensembl" id="ENSMUST00000045628.15">
    <property type="protein sequence ID" value="ENSMUSP00000044570.8"/>
    <property type="gene ID" value="ENSMUSG00000035781.16"/>
</dbReference>
<dbReference type="GeneID" id="109284"/>
<dbReference type="KEGG" id="mmu:109284"/>
<dbReference type="UCSC" id="uc007gan.1">
    <property type="organism name" value="mouse"/>
</dbReference>
<dbReference type="AGR" id="MGI:1924814"/>
<dbReference type="CTD" id="91300"/>
<dbReference type="MGI" id="MGI:1924814">
    <property type="gene designation" value="R3hdm4"/>
</dbReference>
<dbReference type="VEuPathDB" id="HostDB:ENSMUSG00000035781"/>
<dbReference type="eggNOG" id="KOG1478">
    <property type="taxonomic scope" value="Eukaryota"/>
</dbReference>
<dbReference type="GeneTree" id="ENSGT00390000015467"/>
<dbReference type="HOGENOM" id="CLU_081608_0_0_1"/>
<dbReference type="InParanoid" id="Q4VBF2"/>
<dbReference type="OMA" id="NATYMEV"/>
<dbReference type="OrthoDB" id="75169at2759"/>
<dbReference type="PhylomeDB" id="Q4VBF2"/>
<dbReference type="TreeFam" id="TF331754"/>
<dbReference type="BioGRID-ORCS" id="109284">
    <property type="hits" value="3 hits in 77 CRISPR screens"/>
</dbReference>
<dbReference type="ChiTaRS" id="R3hdm4">
    <property type="organism name" value="mouse"/>
</dbReference>
<dbReference type="PRO" id="PR:Q4VBF2"/>
<dbReference type="Proteomes" id="UP000000589">
    <property type="component" value="Chromosome 10"/>
</dbReference>
<dbReference type="RNAct" id="Q4VBF2">
    <property type="molecule type" value="protein"/>
</dbReference>
<dbReference type="Bgee" id="ENSMUSG00000035781">
    <property type="expression patterns" value="Expressed in granulocyte and 219 other cell types or tissues"/>
</dbReference>
<dbReference type="ExpressionAtlas" id="Q4VBF2">
    <property type="expression patterns" value="baseline and differential"/>
</dbReference>
<dbReference type="GO" id="GO:0005634">
    <property type="term" value="C:nucleus"/>
    <property type="evidence" value="ECO:0007669"/>
    <property type="project" value="UniProtKB-SubCell"/>
</dbReference>
<dbReference type="GO" id="GO:0003676">
    <property type="term" value="F:nucleic acid binding"/>
    <property type="evidence" value="ECO:0007669"/>
    <property type="project" value="InterPro"/>
</dbReference>
<dbReference type="CDD" id="cd02325">
    <property type="entry name" value="R3H"/>
    <property type="match status" value="1"/>
</dbReference>
<dbReference type="Gene3D" id="3.30.1370.50">
    <property type="entry name" value="R3H-like domain"/>
    <property type="match status" value="1"/>
</dbReference>
<dbReference type="InterPro" id="IPR025952">
    <property type="entry name" value="R3H-assoc_dom"/>
</dbReference>
<dbReference type="InterPro" id="IPR001374">
    <property type="entry name" value="R3H_dom"/>
</dbReference>
<dbReference type="InterPro" id="IPR036867">
    <property type="entry name" value="R3H_dom_sf"/>
</dbReference>
<dbReference type="InterPro" id="IPR039629">
    <property type="entry name" value="R3HDM4"/>
</dbReference>
<dbReference type="PANTHER" id="PTHR32019">
    <property type="entry name" value="R3H DOMAIN-CONTAINING PROTEIN 4"/>
    <property type="match status" value="1"/>
</dbReference>
<dbReference type="PANTHER" id="PTHR32019:SF2">
    <property type="entry name" value="R3H DOMAIN-CONTAINING PROTEIN 4"/>
    <property type="match status" value="1"/>
</dbReference>
<dbReference type="Pfam" id="PF01424">
    <property type="entry name" value="R3H"/>
    <property type="match status" value="1"/>
</dbReference>
<dbReference type="Pfam" id="PF13902">
    <property type="entry name" value="R3H-assoc"/>
    <property type="match status" value="1"/>
</dbReference>
<dbReference type="SUPFAM" id="SSF82708">
    <property type="entry name" value="R3H domain"/>
    <property type="match status" value="1"/>
</dbReference>
<dbReference type="PROSITE" id="PS51061">
    <property type="entry name" value="R3H"/>
    <property type="match status" value="1"/>
</dbReference>
<sequence>MVALDNSEGGPEATPSGETRLSLPGCLPPLSGSQVKRVSASRRKQHFINQAVRNSDLVPRAKGRKSLQRLENTQYLLTLLETAGGPPGVEDGDLTPAAPGIFAEACSNATYVEVWNDFMNRSGEEQERVLRYLEDESQGKRRRGPGRGEDRRREDPVFTPHECFRRISRRLRSVLKRSRIPMETLESWEERLLAFFSVSPQAVYTAMLDNSYERLLLHAVCQYMDLISASADLEGRRQMKVSNRHLDFLPPELLLSAYLDQQ</sequence>